<evidence type="ECO:0000255" key="1">
    <source>
        <dbReference type="HAMAP-Rule" id="MF_04085"/>
    </source>
</evidence>
<sequence>MAHSKEIPSFRWTQSLRRGLSQVHPTVKTDVLKDAKLIADSIDFNQVSQVQRALRKNKRGEEDLNKLRDLNKEVDRLMSMKSIQKNTIFKIGDLGRDELMELASDLEKLKNKIKRTESGPQGLYMGNLSQLQLTKRSEILKTLGFQQQRGAGNGVVRIWDVSDPSKLNNQFGSMPALTIACMTVQGGETMNSVVQALTSLGLLYTVKYPNLNDLDKLTLEHECLQIVTKDESSINISGYNFSLSAAVKAGASILDGGNMLETIRVTPDNFSSLIKSTLQVKRKEGMFIDEKPGNRNPYENLLYKLCLSGDGWPYIGSRSQILGRSWDNTSVDLTKKPQVGPRQPEKNGQNLRLANLTEMQEAVIKEAVKKLDPTNTLWLDIEGPPTDPVELALYQPANKHYIHCFRKPHDEKGFKNGSRHSHGILMQDIEDAMPGVLSYVIGLLPQDMVITTQGSDDIRKLLDIHGRKDLKLVDVKLTSDQARLYDQQIWEKFGHLCKHHNGVVVNKKKREKDSPFKLSSGEPHCALLDCIMYQSVMDGKMVDEEPVALLPLSLLFLPKAAFAL</sequence>
<feature type="chain" id="PRO_0000079190" description="Nucleoprotein">
    <location>
        <begin position="1"/>
        <end position="564"/>
    </location>
</feature>
<feature type="region of interest" description="Binding site for the cap structure m7GTP" evidence="1">
    <location>
        <begin position="54"/>
        <end position="236"/>
    </location>
</feature>
<feature type="binding site" evidence="1">
    <location>
        <position position="380"/>
    </location>
    <ligand>
        <name>Mn(2+)</name>
        <dbReference type="ChEBI" id="CHEBI:29035"/>
    </ligand>
</feature>
<feature type="binding site" evidence="1">
    <location>
        <position position="382"/>
    </location>
    <ligand>
        <name>Mn(2+)</name>
        <dbReference type="ChEBI" id="CHEBI:29035"/>
    </ligand>
</feature>
<feature type="binding site" evidence="1">
    <location>
        <position position="390"/>
    </location>
    <ligand>
        <name>Zn(2+)</name>
        <dbReference type="ChEBI" id="CHEBI:29105"/>
    </ligand>
</feature>
<feature type="binding site" evidence="1">
    <location>
        <position position="497"/>
    </location>
    <ligand>
        <name>Zn(2+)</name>
        <dbReference type="ChEBI" id="CHEBI:29105"/>
    </ligand>
</feature>
<feature type="binding site" evidence="1">
    <location>
        <position position="500"/>
    </location>
    <ligand>
        <name>Zn(2+)</name>
        <dbReference type="ChEBI" id="CHEBI:29105"/>
    </ligand>
</feature>
<feature type="binding site" evidence="1">
    <location>
        <position position="525"/>
    </location>
    <ligand>
        <name>Zn(2+)</name>
        <dbReference type="ChEBI" id="CHEBI:29105"/>
    </ligand>
</feature>
<feature type="binding site" evidence="1">
    <location>
        <position position="529"/>
    </location>
    <ligand>
        <name>Mn(2+)</name>
        <dbReference type="ChEBI" id="CHEBI:29035"/>
    </ligand>
</feature>
<feature type="site" description="Important for exonuclease activity" evidence="1">
    <location>
        <position position="457"/>
    </location>
</feature>
<name>NCAP_MACHU</name>
<comment type="function">
    <text evidence="1">Encapsidates the genome, protecting it from nucleases. The encapsidated genomic RNA is termed the nucleocapsid (NC). Serves as template for viral transcription and replication. The increased presence of protein N in host cell does not seem to trigger the switch from transcription to replication as observed in other negative strain RNA viruses. Through the interaction with host IKBKE, strongly inhibits the phosphorylation and nuclear translocation of host IRF3, a protein involved in interferon activation pathway, leading to the inhibition of interferon-beta and IRF3-dependent promoters activation. Also encodes a functional 3'-5' exoribonuclease that degrades preferentially dsRNA substrates and thereby participates in the suppression of interferon induction.</text>
</comment>
<comment type="subunit">
    <text evidence="1">Homomultimerizes to form the nucleocapsid. Binds to viral genomic RNA. Interacts with glycoprotein G2. Interacts with protein Z; this interaction probably directs the encapsidated genome to budding sites. Interacts with protein L; this interaction does not interfere with Z-L interaction. Interacts with host IKBKE (via Protein kinase domain); the interaction inhibits IKBKE kinase activity.</text>
</comment>
<comment type="subcellular location">
    <subcellularLocation>
        <location evidence="1">Virion</location>
    </subcellularLocation>
    <subcellularLocation>
        <location evidence="1">Host cytoplasm</location>
    </subcellularLocation>
</comment>
<comment type="domain">
    <text evidence="1">The N-terminal region is important for the cap-binding activity while the C-terminal region contains the 3'-5' exoribonuclease activity. A CCHE zinc binding site is present in the C-terminal region and may thus contribute to the substrate binding and/or the specificity of the exonuclease activity.</text>
</comment>
<comment type="similarity">
    <text evidence="1">Belongs to the arenaviridae nucleocapsid protein family.</text>
</comment>
<organismHost>
    <name type="scientific">Calomys callosus</name>
    <name type="common">Large vesper mouse</name>
    <dbReference type="NCBI Taxonomy" id="56210"/>
</organismHost>
<organismHost>
    <name type="scientific">Chlorocebus aethiops</name>
    <name type="common">Green monkey</name>
    <name type="synonym">Cercopithecus aethiops</name>
    <dbReference type="NCBI Taxonomy" id="9534"/>
</organismHost>
<organismHost>
    <name type="scientific">Homo sapiens</name>
    <name type="common">Human</name>
    <dbReference type="NCBI Taxonomy" id="9606"/>
</organismHost>
<keyword id="KW-0167">Capsid protein</keyword>
<keyword id="KW-1139">Helical capsid protein</keyword>
<keyword id="KW-1035">Host cytoplasm</keyword>
<keyword id="KW-0945">Host-virus interaction</keyword>
<keyword id="KW-0378">Hydrolase</keyword>
<keyword id="KW-1224">Inhibition of host IKBKE by virus</keyword>
<keyword id="KW-1090">Inhibition of host innate immune response by virus</keyword>
<keyword id="KW-1113">Inhibition of host RLR pathway by virus</keyword>
<keyword id="KW-0922">Interferon antiviral system evasion</keyword>
<keyword id="KW-0464">Manganese</keyword>
<keyword id="KW-0479">Metal-binding</keyword>
<keyword id="KW-0687">Ribonucleoprotein</keyword>
<keyword id="KW-0694">RNA-binding</keyword>
<keyword id="KW-0899">Viral immunoevasion</keyword>
<keyword id="KW-0543">Viral nucleoprotein</keyword>
<keyword id="KW-0946">Virion</keyword>
<keyword id="KW-0862">Zinc</keyword>
<accession>P26578</accession>
<reference key="1">
    <citation type="journal article" date="1992" name="Arch. Virol.">
        <title>Sequence of the nucleocapsid protein gene of Machupo virus: close relationship with another South American pathogenic arenavirus, Junin.</title>
        <authorList>
            <person name="Griffiths C."/>
            <person name="Wilson S.M."/>
            <person name="Clegg J.C.S."/>
        </authorList>
    </citation>
    <scope>NUCLEOTIDE SEQUENCE [GENOMIC RNA]</scope>
    <source>
        <strain>AA288-77</strain>
    </source>
</reference>
<proteinExistence type="inferred from homology"/>
<protein>
    <recommendedName>
        <fullName evidence="1">Nucleoprotein</fullName>
        <ecNumber evidence="1">3.1.13.-</ecNumber>
    </recommendedName>
    <alternativeName>
        <fullName evidence="1">Nucleocapsid protein</fullName>
    </alternativeName>
    <alternativeName>
        <fullName evidence="1">Protein N</fullName>
    </alternativeName>
</protein>
<organism>
    <name type="scientific">Machupo virus</name>
    <name type="common">MACV</name>
    <dbReference type="NCBI Taxonomy" id="3052317"/>
    <lineage>
        <taxon>Viruses</taxon>
        <taxon>Riboviria</taxon>
        <taxon>Orthornavirae</taxon>
        <taxon>Negarnaviricota</taxon>
        <taxon>Polyploviricotina</taxon>
        <taxon>Ellioviricetes</taxon>
        <taxon>Bunyavirales</taxon>
        <taxon>Arenaviridae</taxon>
        <taxon>Mammarenavirus</taxon>
    </lineage>
</organism>
<dbReference type="EC" id="3.1.13.-" evidence="1"/>
<dbReference type="EMBL" id="X62616">
    <property type="protein sequence ID" value="CAA44486.1"/>
    <property type="molecule type" value="Genomic_RNA"/>
</dbReference>
<dbReference type="PIR" id="S18042">
    <property type="entry name" value="VHXPMV"/>
</dbReference>
<dbReference type="SMR" id="P26578"/>
<dbReference type="GO" id="GO:0019029">
    <property type="term" value="C:helical viral capsid"/>
    <property type="evidence" value="ECO:0007669"/>
    <property type="project" value="UniProtKB-UniRule"/>
</dbReference>
<dbReference type="GO" id="GO:0030430">
    <property type="term" value="C:host cell cytoplasm"/>
    <property type="evidence" value="ECO:0007669"/>
    <property type="project" value="UniProtKB-SubCell"/>
</dbReference>
<dbReference type="GO" id="GO:1990904">
    <property type="term" value="C:ribonucleoprotein complex"/>
    <property type="evidence" value="ECO:0007669"/>
    <property type="project" value="UniProtKB-KW"/>
</dbReference>
<dbReference type="GO" id="GO:0019013">
    <property type="term" value="C:viral nucleocapsid"/>
    <property type="evidence" value="ECO:0007669"/>
    <property type="project" value="UniProtKB-UniRule"/>
</dbReference>
<dbReference type="GO" id="GO:0016787">
    <property type="term" value="F:hydrolase activity"/>
    <property type="evidence" value="ECO:0007669"/>
    <property type="project" value="UniProtKB-KW"/>
</dbReference>
<dbReference type="GO" id="GO:0046872">
    <property type="term" value="F:metal ion binding"/>
    <property type="evidence" value="ECO:0007669"/>
    <property type="project" value="UniProtKB-UniRule"/>
</dbReference>
<dbReference type="GO" id="GO:0003723">
    <property type="term" value="F:RNA binding"/>
    <property type="evidence" value="ECO:0007669"/>
    <property type="project" value="UniProtKB-UniRule"/>
</dbReference>
<dbReference type="GO" id="GO:0039689">
    <property type="term" value="P:negative stranded viral RNA replication"/>
    <property type="evidence" value="ECO:0000250"/>
    <property type="project" value="UniProtKB"/>
</dbReference>
<dbReference type="GO" id="GO:0039696">
    <property type="term" value="P:RNA-templated viral transcription"/>
    <property type="evidence" value="ECO:0000250"/>
    <property type="project" value="UniProtKB"/>
</dbReference>
<dbReference type="GO" id="GO:0039724">
    <property type="term" value="P:symbiont-mediated suppression of host cytoplasmic pattern recognition receptor signaling pathway via inhibition of IKBKE activity"/>
    <property type="evidence" value="ECO:0007669"/>
    <property type="project" value="UniProtKB-UniRule"/>
</dbReference>
<dbReference type="FunFam" id="1.10.150.550:FF:000002">
    <property type="entry name" value="Nucleoprotein"/>
    <property type="match status" value="1"/>
</dbReference>
<dbReference type="FunFam" id="3.30.420.410:FF:000001">
    <property type="entry name" value="Nucleoprotein"/>
    <property type="match status" value="1"/>
</dbReference>
<dbReference type="Gene3D" id="3.30.420.410">
    <property type="entry name" value="Arenaviral nucleoprotein, C-terminal domain"/>
    <property type="match status" value="1"/>
</dbReference>
<dbReference type="Gene3D" id="1.10.150.550">
    <property type="entry name" value="Arenavirus nucleocapsid protein, head domain"/>
    <property type="match status" value="3"/>
</dbReference>
<dbReference type="HAMAP" id="MF_04085">
    <property type="entry name" value="ARENA_NCAP"/>
    <property type="match status" value="1"/>
</dbReference>
<dbReference type="InterPro" id="IPR000229">
    <property type="entry name" value="Nucleocapsid_arenaviridae"/>
</dbReference>
<dbReference type="InterPro" id="IPR035084">
    <property type="entry name" value="Nucleocapsid_C_arenaviridae"/>
</dbReference>
<dbReference type="InterPro" id="IPR038115">
    <property type="entry name" value="Nucleocapsid_C_sf"/>
</dbReference>
<dbReference type="InterPro" id="IPR035083">
    <property type="entry name" value="Nucleocapsid_N_arenaviridae"/>
</dbReference>
<dbReference type="InterPro" id="IPR012337">
    <property type="entry name" value="RNaseH-like_sf"/>
</dbReference>
<dbReference type="Pfam" id="PF17290">
    <property type="entry name" value="Arena_ncap_C"/>
    <property type="match status" value="1"/>
</dbReference>
<dbReference type="Pfam" id="PF00843">
    <property type="entry name" value="Arena_nucleocap"/>
    <property type="match status" value="1"/>
</dbReference>
<dbReference type="PIRSF" id="PIRSF004029">
    <property type="entry name" value="N_ArenaV"/>
    <property type="match status" value="1"/>
</dbReference>
<dbReference type="SUPFAM" id="SSF53098">
    <property type="entry name" value="Ribonuclease H-like"/>
    <property type="match status" value="1"/>
</dbReference>
<gene>
    <name evidence="1" type="primary">N</name>
</gene>